<gene>
    <name type="primary">CDR2</name>
    <name type="synonym">PCD17</name>
</gene>
<dbReference type="EMBL" id="M63256">
    <property type="protein sequence ID" value="AAA51961.1"/>
    <property type="status" value="ALT_SEQ"/>
    <property type="molecule type" value="mRNA"/>
</dbReference>
<dbReference type="EMBL" id="AK292273">
    <property type="protein sequence ID" value="BAF84962.1"/>
    <property type="molecule type" value="mRNA"/>
</dbReference>
<dbReference type="EMBL" id="CH471249">
    <property type="protein sequence ID" value="EAW50609.1"/>
    <property type="molecule type" value="Genomic_DNA"/>
</dbReference>
<dbReference type="EMBL" id="BC017503">
    <property type="protein sequence ID" value="AAH17503.2"/>
    <property type="molecule type" value="mRNA"/>
</dbReference>
<dbReference type="EMBL" id="D12981">
    <property type="protein sequence ID" value="BAA02360.1"/>
    <property type="status" value="ALT_INIT"/>
    <property type="molecule type" value="mRNA"/>
</dbReference>
<dbReference type="EMBL" id="S78388">
    <property type="protein sequence ID" value="AAB20813.1"/>
    <property type="status" value="ALT_INIT"/>
    <property type="molecule type" value="mRNA"/>
</dbReference>
<dbReference type="CCDS" id="CCDS32404.1"/>
<dbReference type="PIR" id="A40448">
    <property type="entry name" value="A40448"/>
</dbReference>
<dbReference type="RefSeq" id="NP_001793.1">
    <property type="nucleotide sequence ID" value="NM_001802.2"/>
</dbReference>
<dbReference type="RefSeq" id="XP_005276559.1">
    <property type="nucleotide sequence ID" value="XM_005276502.1"/>
</dbReference>
<dbReference type="SMR" id="Q01850"/>
<dbReference type="BioGRID" id="107470">
    <property type="interactions" value="140"/>
</dbReference>
<dbReference type="FunCoup" id="Q01850">
    <property type="interactions" value="443"/>
</dbReference>
<dbReference type="IntAct" id="Q01850">
    <property type="interactions" value="130"/>
</dbReference>
<dbReference type="MINT" id="Q01850"/>
<dbReference type="STRING" id="9606.ENSP00000268383"/>
<dbReference type="GlyGen" id="Q01850">
    <property type="glycosylation" value="1 site, 1 O-linked glycan (1 site)"/>
</dbReference>
<dbReference type="iPTMnet" id="Q01850"/>
<dbReference type="PhosphoSitePlus" id="Q01850"/>
<dbReference type="BioMuta" id="CDR2"/>
<dbReference type="DMDM" id="68839004"/>
<dbReference type="jPOST" id="Q01850"/>
<dbReference type="MassIVE" id="Q01850"/>
<dbReference type="PaxDb" id="9606-ENSP00000268383"/>
<dbReference type="PeptideAtlas" id="Q01850"/>
<dbReference type="ProteomicsDB" id="58009"/>
<dbReference type="Pumba" id="Q01850"/>
<dbReference type="Antibodypedia" id="12516">
    <property type="antibodies" value="387 antibodies from 29 providers"/>
</dbReference>
<dbReference type="DNASU" id="1039"/>
<dbReference type="Ensembl" id="ENST00000268383.7">
    <property type="protein sequence ID" value="ENSP00000268383.2"/>
    <property type="gene ID" value="ENSG00000140743.8"/>
</dbReference>
<dbReference type="GeneID" id="1039"/>
<dbReference type="KEGG" id="hsa:1039"/>
<dbReference type="MANE-Select" id="ENST00000268383.7">
    <property type="protein sequence ID" value="ENSP00000268383.2"/>
    <property type="RefSeq nucleotide sequence ID" value="NM_001802.2"/>
    <property type="RefSeq protein sequence ID" value="NP_001793.1"/>
</dbReference>
<dbReference type="UCSC" id="uc002dkn.3">
    <property type="organism name" value="human"/>
</dbReference>
<dbReference type="AGR" id="HGNC:1799"/>
<dbReference type="CTD" id="1039"/>
<dbReference type="DisGeNET" id="1039"/>
<dbReference type="GeneCards" id="CDR2"/>
<dbReference type="HGNC" id="HGNC:1799">
    <property type="gene designation" value="CDR2"/>
</dbReference>
<dbReference type="HPA" id="ENSG00000140743">
    <property type="expression patterns" value="Low tissue specificity"/>
</dbReference>
<dbReference type="MIM" id="117340">
    <property type="type" value="gene"/>
</dbReference>
<dbReference type="neXtProt" id="NX_Q01850"/>
<dbReference type="OpenTargets" id="ENSG00000140743"/>
<dbReference type="PharmGKB" id="PA26331"/>
<dbReference type="VEuPathDB" id="HostDB:ENSG00000140743"/>
<dbReference type="eggNOG" id="ENOG502QUPP">
    <property type="taxonomic scope" value="Eukaryota"/>
</dbReference>
<dbReference type="GeneTree" id="ENSGT00390000018570"/>
<dbReference type="HOGENOM" id="CLU_048751_0_0_1"/>
<dbReference type="InParanoid" id="Q01850"/>
<dbReference type="OMA" id="GCRARQK"/>
<dbReference type="OrthoDB" id="10059415at2759"/>
<dbReference type="PAN-GO" id="Q01850">
    <property type="GO annotations" value="0 GO annotations based on evolutionary models"/>
</dbReference>
<dbReference type="PhylomeDB" id="Q01850"/>
<dbReference type="TreeFam" id="TF326183"/>
<dbReference type="PathwayCommons" id="Q01850"/>
<dbReference type="SignaLink" id="Q01850"/>
<dbReference type="SIGNOR" id="Q01850"/>
<dbReference type="BioGRID-ORCS" id="1039">
    <property type="hits" value="16 hits in 1165 CRISPR screens"/>
</dbReference>
<dbReference type="ChiTaRS" id="CDR2">
    <property type="organism name" value="human"/>
</dbReference>
<dbReference type="GeneWiki" id="CDR2_(gene)"/>
<dbReference type="Pharos" id="Q01850">
    <property type="development level" value="Tbio"/>
</dbReference>
<dbReference type="PRO" id="PR:Q01850"/>
<dbReference type="Proteomes" id="UP000005640">
    <property type="component" value="Chromosome 16"/>
</dbReference>
<dbReference type="RNAct" id="Q01850">
    <property type="molecule type" value="protein"/>
</dbReference>
<dbReference type="Bgee" id="ENSG00000140743">
    <property type="expression patterns" value="Expressed in secondary oocyte and 171 other cell types or tissues"/>
</dbReference>
<dbReference type="ExpressionAtlas" id="Q01850">
    <property type="expression patterns" value="baseline and differential"/>
</dbReference>
<dbReference type="GO" id="GO:0005737">
    <property type="term" value="C:cytoplasm"/>
    <property type="evidence" value="ECO:0007669"/>
    <property type="project" value="Ensembl"/>
</dbReference>
<dbReference type="InterPro" id="IPR026079">
    <property type="entry name" value="CDR2"/>
</dbReference>
<dbReference type="PANTHER" id="PTHR19232">
    <property type="entry name" value="CENTROCORTIN FAMILY MEMBER"/>
    <property type="match status" value="1"/>
</dbReference>
<dbReference type="PANTHER" id="PTHR19232:SF1">
    <property type="entry name" value="CEREBELLAR DEGENERATION-RELATED PROTEIN 2"/>
    <property type="match status" value="1"/>
</dbReference>
<comment type="interaction">
    <interactant intactId="EBI-1181367">
        <id>Q01850</id>
    </interactant>
    <interactant intactId="EBI-10187270">
        <id>Q9Y2J4-4</id>
        <label>AMOTL2</label>
    </interactant>
    <organismsDiffer>false</organismsDiffer>
    <experiments>3</experiments>
</comment>
<comment type="interaction">
    <interactant intactId="EBI-1181367">
        <id>Q01850</id>
    </interactant>
    <interactant intactId="EBI-744859">
        <id>Q96IX9</id>
        <label>ANKRD36BP1</label>
    </interactant>
    <organismsDiffer>false</organismsDiffer>
    <experiments>3</experiments>
</comment>
<comment type="interaction">
    <interactant intactId="EBI-1181367">
        <id>Q01850</id>
    </interactant>
    <interactant intactId="EBI-745213">
        <id>P29972</id>
        <label>AQP1</label>
    </interactant>
    <organismsDiffer>false</organismsDiffer>
    <experiments>3</experiments>
</comment>
<comment type="interaction">
    <interactant intactId="EBI-1181367">
        <id>Q01850</id>
    </interactant>
    <interactant intactId="EBI-745073">
        <id>Q9BXY8</id>
        <label>BEX2</label>
    </interactant>
    <organismsDiffer>false</organismsDiffer>
    <experiments>3</experiments>
</comment>
<comment type="interaction">
    <interactant intactId="EBI-1181367">
        <id>Q01850</id>
    </interactant>
    <interactant intactId="EBI-747505">
        <id>Q8TAB5</id>
        <label>C1orf216</label>
    </interactant>
    <organismsDiffer>false</organismsDiffer>
    <experiments>6</experiments>
</comment>
<comment type="interaction">
    <interactant intactId="EBI-1181367">
        <id>Q01850</id>
    </interactant>
    <interactant intactId="EBI-739879">
        <id>Q53TS8</id>
        <label>C2CD6</label>
    </interactant>
    <organismsDiffer>false</organismsDiffer>
    <experiments>3</experiments>
</comment>
<comment type="interaction">
    <interactant intactId="EBI-1181367">
        <id>Q01850</id>
    </interactant>
    <interactant intactId="EBI-6657981">
        <id>Q504U0</id>
        <label>C4orf46</label>
    </interactant>
    <organismsDiffer>false</organismsDiffer>
    <experiments>9</experiments>
</comment>
<comment type="interaction">
    <interactant intactId="EBI-1181367">
        <id>Q01850</id>
    </interactant>
    <interactant intactId="EBI-744556">
        <id>Q96HB5</id>
        <label>CCDC120</label>
    </interactant>
    <organismsDiffer>false</organismsDiffer>
    <experiments>3</experiments>
</comment>
<comment type="interaction">
    <interactant intactId="EBI-1181367">
        <id>Q01850</id>
    </interactant>
    <interactant intactId="EBI-10961312">
        <id>Q8IYE1</id>
        <label>CCDC13</label>
    </interactant>
    <organismsDiffer>false</organismsDiffer>
    <experiments>3</experiments>
</comment>
<comment type="interaction">
    <interactant intactId="EBI-1181367">
        <id>Q01850</id>
    </interactant>
    <interactant intactId="EBI-10749669">
        <id>Q8IYE0</id>
        <label>CCDC146</label>
    </interactant>
    <organismsDiffer>false</organismsDiffer>
    <experiments>3</experiments>
</comment>
<comment type="interaction">
    <interactant intactId="EBI-1181367">
        <id>Q01850</id>
    </interactant>
    <interactant intactId="EBI-749261">
        <id>Q9NVE4</id>
        <label>CCDC87</label>
    </interactant>
    <organismsDiffer>false</organismsDiffer>
    <experiments>3</experiments>
</comment>
<comment type="interaction">
    <interactant intactId="EBI-1181367">
        <id>Q01850</id>
    </interactant>
    <interactant intactId="EBI-10175300">
        <id>Q8TD31-3</id>
        <label>CCHCR1</label>
    </interactant>
    <organismsDiffer>false</organismsDiffer>
    <experiments>6</experiments>
</comment>
<comment type="interaction">
    <interactant intactId="EBI-1181367">
        <id>Q01850</id>
    </interactant>
    <interactant intactId="EBI-746238">
        <id>Q07002</id>
        <label>CDK18</label>
    </interactant>
    <organismsDiffer>false</organismsDiffer>
    <experiments>3</experiments>
</comment>
<comment type="interaction">
    <interactant intactId="EBI-1181367">
        <id>Q01850</id>
    </interactant>
    <interactant intactId="EBI-11063830">
        <id>Q86X02</id>
        <label>CDR2L</label>
    </interactant>
    <organismsDiffer>false</organismsDiffer>
    <experiments>8</experiments>
</comment>
<comment type="interaction">
    <interactant intactId="EBI-1181367">
        <id>Q01850</id>
    </interactant>
    <interactant intactId="EBI-10181988">
        <id>Q8IYX8-2</id>
        <label>CEP57L1</label>
    </interactant>
    <organismsDiffer>false</organismsDiffer>
    <experiments>3</experiments>
</comment>
<comment type="interaction">
    <interactant intactId="EBI-1181367">
        <id>Q01850</id>
    </interactant>
    <interactant intactId="EBI-741528">
        <id>Q9UKJ5</id>
        <label>CHIC2</label>
    </interactant>
    <organismsDiffer>false</organismsDiffer>
    <experiments>7</experiments>
</comment>
<comment type="interaction">
    <interactant intactId="EBI-1181367">
        <id>Q01850</id>
    </interactant>
    <interactant intactId="EBI-1053725">
        <id>P10606</id>
        <label>COX5B</label>
    </interactant>
    <organismsDiffer>false</organismsDiffer>
    <experiments>7</experiments>
</comment>
<comment type="interaction">
    <interactant intactId="EBI-1181367">
        <id>Q01850</id>
    </interactant>
    <interactant intactId="EBI-10241443">
        <id>Q494R4</id>
        <label>DRC12</label>
    </interactant>
    <organismsDiffer>false</organismsDiffer>
    <experiments>3</experiments>
</comment>
<comment type="interaction">
    <interactant intactId="EBI-1181367">
        <id>Q01850</id>
    </interactant>
    <interactant intactId="EBI-11974185">
        <id>Q494R4-2</id>
        <label>DRC12</label>
    </interactant>
    <organismsDiffer>false</organismsDiffer>
    <experiments>3</experiments>
</comment>
<comment type="interaction">
    <interactant intactId="EBI-1181367">
        <id>Q01850</id>
    </interactant>
    <interactant intactId="EBI-398610">
        <id>O60573</id>
        <label>EIF4E2</label>
    </interactant>
    <organismsDiffer>false</organismsDiffer>
    <experiments>3</experiments>
</comment>
<comment type="interaction">
    <interactant intactId="EBI-1181367">
        <id>Q01850</id>
    </interactant>
    <interactant intactId="EBI-744099">
        <id>Q9H0I2</id>
        <label>ENKD1</label>
    </interactant>
    <organismsDiffer>false</organismsDiffer>
    <experiments>6</experiments>
</comment>
<comment type="interaction">
    <interactant intactId="EBI-1181367">
        <id>Q01850</id>
    </interactant>
    <interactant intactId="EBI-1752811">
        <id>Q9BQ89</id>
        <label>FAM110A</label>
    </interactant>
    <organismsDiffer>false</organismsDiffer>
    <experiments>3</experiments>
</comment>
<comment type="interaction">
    <interactant intactId="EBI-1181367">
        <id>Q01850</id>
    </interactant>
    <interactant intactId="EBI-719941">
        <id>Q3B820</id>
        <label>FAM161A</label>
    </interactant>
    <organismsDiffer>false</organismsDiffer>
    <experiments>6</experiments>
</comment>
<comment type="interaction">
    <interactant intactId="EBI-1181367">
        <id>Q01850</id>
    </interactant>
    <interactant intactId="EBI-7225287">
        <id>Q96MY7</id>
        <label>FAM161B</label>
    </interactant>
    <organismsDiffer>false</organismsDiffer>
    <experiments>3</experiments>
</comment>
<comment type="interaction">
    <interactant intactId="EBI-1181367">
        <id>Q01850</id>
    </interactant>
    <interactant intactId="EBI-742802">
        <id>Q9Y247</id>
        <label>FAM50B</label>
    </interactant>
    <organismsDiffer>false</organismsDiffer>
    <experiments>3</experiments>
</comment>
<comment type="interaction">
    <interactant intactId="EBI-1181367">
        <id>Q01850</id>
    </interactant>
    <interactant intactId="EBI-6658203">
        <id>Q86YD7</id>
        <label>FAM90A1</label>
    </interactant>
    <organismsDiffer>false</organismsDiffer>
    <experiments>3</experiments>
</comment>
<comment type="interaction">
    <interactant intactId="EBI-1181367">
        <id>Q01850</id>
    </interactant>
    <interactant intactId="EBI-1052570">
        <id>O95995</id>
        <label>GAS8</label>
    </interactant>
    <organismsDiffer>false</organismsDiffer>
    <experiments>3</experiments>
</comment>
<comment type="interaction">
    <interactant intactId="EBI-1181367">
        <id>Q01850</id>
    </interactant>
    <interactant intactId="EBI-744104">
        <id>P55040</id>
        <label>GEM</label>
    </interactant>
    <organismsDiffer>false</organismsDiffer>
    <experiments>3</experiments>
</comment>
<comment type="interaction">
    <interactant intactId="EBI-1181367">
        <id>Q01850</id>
    </interactant>
    <interactant intactId="EBI-2514791">
        <id>Q96CS2</id>
        <label>HAUS1</label>
    </interactant>
    <organismsDiffer>false</organismsDiffer>
    <experiments>3</experiments>
</comment>
<comment type="interaction">
    <interactant intactId="EBI-1181367">
        <id>Q01850</id>
    </interactant>
    <interactant intactId="EBI-308629">
        <id>P56524</id>
        <label>HDAC4</label>
    </interactant>
    <organismsDiffer>false</organismsDiffer>
    <experiments>3</experiments>
</comment>
<comment type="interaction">
    <interactant intactId="EBI-1181367">
        <id>Q01850</id>
    </interactant>
    <interactant intactId="EBI-11953488">
        <id>P56524-2</id>
        <label>HDAC4</label>
    </interactant>
    <organismsDiffer>false</organismsDiffer>
    <experiments>3</experiments>
</comment>
<comment type="interaction">
    <interactant intactId="EBI-1181367">
        <id>Q01850</id>
    </interactant>
    <interactant intactId="EBI-16429135">
        <id>A0A0S2Z4Q4</id>
        <label>HGS</label>
    </interactant>
    <organismsDiffer>false</organismsDiffer>
    <experiments>3</experiments>
</comment>
<comment type="interaction">
    <interactant intactId="EBI-1181367">
        <id>Q01850</id>
    </interactant>
    <interactant intactId="EBI-740220">
        <id>O14964</id>
        <label>HGS</label>
    </interactant>
    <organismsDiffer>false</organismsDiffer>
    <experiments>6</experiments>
</comment>
<comment type="interaction">
    <interactant intactId="EBI-1181367">
        <id>Q01850</id>
    </interactant>
    <interactant intactId="EBI-715611">
        <id>Q9C086</id>
        <label>INO80B</label>
    </interactant>
    <organismsDiffer>false</organismsDiffer>
    <experiments>3</experiments>
</comment>
<comment type="interaction">
    <interactant intactId="EBI-1181367">
        <id>Q01850</id>
    </interactant>
    <interactant intactId="EBI-740244">
        <id>Q7Z3B3</id>
        <label>KANSL1</label>
    </interactant>
    <organismsDiffer>false</organismsDiffer>
    <experiments>4</experiments>
</comment>
<comment type="interaction">
    <interactant intactId="EBI-1181367">
        <id>Q01850</id>
    </interactant>
    <interactant intactId="EBI-355878">
        <id>P33176</id>
        <label>KIF5B</label>
    </interactant>
    <organismsDiffer>false</organismsDiffer>
    <experiments>3</experiments>
</comment>
<comment type="interaction">
    <interactant intactId="EBI-1181367">
        <id>Q01850</id>
    </interactant>
    <interactant intactId="EBI-2125614">
        <id>Q9BVG8</id>
        <label>KIFC3</label>
    </interactant>
    <organismsDiffer>false</organismsDiffer>
    <experiments>3</experiments>
</comment>
<comment type="interaction">
    <interactant intactId="EBI-1181367">
        <id>Q01850</id>
    </interactant>
    <interactant intactId="EBI-14069005">
        <id>Q9BVG8-5</id>
        <label>KIFC3</label>
    </interactant>
    <organismsDiffer>false</organismsDiffer>
    <experiments>3</experiments>
</comment>
<comment type="interaction">
    <interactant intactId="EBI-1181367">
        <id>Q01850</id>
    </interactant>
    <interactant intactId="EBI-726510">
        <id>Q96BZ8</id>
        <label>LENG1</label>
    </interactant>
    <organismsDiffer>false</organismsDiffer>
    <experiments>6</experiments>
</comment>
<comment type="interaction">
    <interactant intactId="EBI-1181367">
        <id>Q01850</id>
    </interactant>
    <interactant intactId="EBI-748884">
        <id>Q96GY3</id>
        <label>LIN37</label>
    </interactant>
    <organismsDiffer>false</organismsDiffer>
    <experiments>3</experiments>
</comment>
<comment type="interaction">
    <interactant intactId="EBI-1181367">
        <id>Q01850</id>
    </interactant>
    <interactant intactId="EBI-14086479">
        <id>Q8IVT4</id>
        <label>MGC50722</label>
    </interactant>
    <organismsDiffer>false</organismsDiffer>
    <experiments>3</experiments>
</comment>
<comment type="interaction">
    <interactant intactId="EBI-1181367">
        <id>Q01850</id>
    </interactant>
    <interactant intactId="EBI-2555563">
        <id>Q8IY33</id>
        <label>MICALL2</label>
    </interactant>
    <organismsDiffer>false</organismsDiffer>
    <experiments>3</experiments>
</comment>
<comment type="interaction">
    <interactant intactId="EBI-1181367">
        <id>Q01850</id>
    </interactant>
    <interactant intactId="EBI-721319">
        <id>Q9NPJ1</id>
        <label>MKKS</label>
    </interactant>
    <organismsDiffer>false</organismsDiffer>
    <experiments>3</experiments>
</comment>
<comment type="interaction">
    <interactant intactId="EBI-1181367">
        <id>Q01850</id>
    </interactant>
    <interactant intactId="EBI-743811">
        <id>Q8NEH6</id>
        <label>MNS1</label>
    </interactant>
    <organismsDiffer>false</organismsDiffer>
    <experiments>3</experiments>
</comment>
<comment type="interaction">
    <interactant intactId="EBI-1181367">
        <id>Q01850</id>
    </interactant>
    <interactant intactId="EBI-399257">
        <id>Q15014</id>
        <label>MORF4L2</label>
    </interactant>
    <organismsDiffer>false</organismsDiffer>
    <experiments>6</experiments>
</comment>
<comment type="interaction">
    <interactant intactId="EBI-1181367">
        <id>Q01850</id>
    </interactant>
    <interactant intactId="EBI-723426">
        <id>Q13084</id>
        <label>MRPL28</label>
    </interactant>
    <organismsDiffer>false</organismsDiffer>
    <experiments>3</experiments>
</comment>
<comment type="interaction">
    <interactant intactId="EBI-1181367">
        <id>Q01850</id>
    </interactant>
    <interactant intactId="EBI-741158">
        <id>Q96HA8</id>
        <label>NTAQ1</label>
    </interactant>
    <organismsDiffer>false</organismsDiffer>
    <experiments>4</experiments>
</comment>
<comment type="interaction">
    <interactant intactId="EBI-1181367">
        <id>Q01850</id>
    </interactant>
    <interactant intactId="EBI-1051861">
        <id>O95190</id>
        <label>OAZ2</label>
    </interactant>
    <organismsDiffer>false</organismsDiffer>
    <experiments>3</experiments>
</comment>
<comment type="interaction">
    <interactant intactId="EBI-1181367">
        <id>Q01850</id>
    </interactant>
    <interactant intactId="EBI-10239064">
        <id>Q17RL8</id>
        <label>PDZD4</label>
    </interactant>
    <organismsDiffer>false</organismsDiffer>
    <experiments>3</experiments>
</comment>
<comment type="interaction">
    <interactant intactId="EBI-1181367">
        <id>Q01850</id>
    </interactant>
    <interactant intactId="EBI-602382">
        <id>Q16512</id>
        <label>PKN1</label>
    </interactant>
    <organismsDiffer>false</organismsDiffer>
    <experiments>6</experiments>
</comment>
<comment type="interaction">
    <interactant intactId="EBI-1181367">
        <id>Q01850</id>
    </interactant>
    <interactant intactId="EBI-1383852">
        <id>P54646</id>
        <label>PRKAA2</label>
    </interactant>
    <organismsDiffer>false</organismsDiffer>
    <experiments>3</experiments>
</comment>
<comment type="interaction">
    <interactant intactId="EBI-1181367">
        <id>Q01850</id>
    </interactant>
    <interactant intactId="EBI-2798416">
        <id>Q99633</id>
        <label>PRPF18</label>
    </interactant>
    <organismsDiffer>false</organismsDiffer>
    <experiments>3</experiments>
</comment>
<comment type="interaction">
    <interactant intactId="EBI-1181367">
        <id>Q01850</id>
    </interactant>
    <interactant intactId="EBI-359352">
        <id>P25786</id>
        <label>PSMA1</label>
    </interactant>
    <organismsDiffer>false</organismsDiffer>
    <experiments>3</experiments>
</comment>
<comment type="interaction">
    <interactant intactId="EBI-1181367">
        <id>Q01850</id>
    </interactant>
    <interactant intactId="EBI-743428">
        <id>Q9P2K3</id>
        <label>RCOR3</label>
    </interactant>
    <organismsDiffer>false</organismsDiffer>
    <experiments>3</experiments>
</comment>
<comment type="interaction">
    <interactant intactId="EBI-1181367">
        <id>Q01850</id>
    </interactant>
    <interactant intactId="EBI-748350">
        <id>Q9UHP6</id>
        <label>RSPH14</label>
    </interactant>
    <organismsDiffer>false</organismsDiffer>
    <experiments>3</experiments>
</comment>
<comment type="interaction">
    <interactant intactId="EBI-1181367">
        <id>Q01850</id>
    </interactant>
    <interactant intactId="EBI-11984663">
        <id>Q06455-2</id>
        <label>RUNX1T1</label>
    </interactant>
    <organismsDiffer>false</organismsDiffer>
    <experiments>3</experiments>
</comment>
<comment type="interaction">
    <interactant intactId="EBI-1181367">
        <id>Q01850</id>
    </interactant>
    <interactant intactId="EBI-748391">
        <id>Q9BWG6</id>
        <label>SCNM1</label>
    </interactant>
    <organismsDiffer>false</organismsDiffer>
    <experiments>6</experiments>
</comment>
<comment type="interaction">
    <interactant intactId="EBI-1181367">
        <id>Q01850</id>
    </interactant>
    <interactant intactId="EBI-747035">
        <id>Q9H788</id>
        <label>SH2D4A</label>
    </interactant>
    <organismsDiffer>false</organismsDiffer>
    <experiments>6</experiments>
</comment>
<comment type="interaction">
    <interactant intactId="EBI-1181367">
        <id>Q01850</id>
    </interactant>
    <interactant intactId="EBI-10308083">
        <id>Q9H788-2</id>
        <label>SH2D4A</label>
    </interactant>
    <organismsDiffer>false</organismsDiffer>
    <experiments>3</experiments>
</comment>
<comment type="interaction">
    <interactant intactId="EBI-1181367">
        <id>Q01850</id>
    </interactant>
    <interactant intactId="EBI-358489">
        <id>Q96GM5</id>
        <label>SMARCD1</label>
    </interactant>
    <organismsDiffer>false</organismsDiffer>
    <experiments>3</experiments>
</comment>
<comment type="interaction">
    <interactant intactId="EBI-1181367">
        <id>Q01850</id>
    </interactant>
    <interactant intactId="EBI-455078">
        <id>Q969G3</id>
        <label>SMARCE1</label>
    </interactant>
    <organismsDiffer>false</organismsDiffer>
    <experiments>6</experiments>
</comment>
<comment type="interaction">
    <interactant intactId="EBI-1181367">
        <id>Q01850</id>
    </interactant>
    <interactant intactId="EBI-8787464">
        <id>Q9NU19</id>
        <label>TBC1D22B</label>
    </interactant>
    <organismsDiffer>false</organismsDiffer>
    <experiments>4</experiments>
</comment>
<comment type="interaction">
    <interactant intactId="EBI-1181367">
        <id>Q01850</id>
    </interactant>
    <interactant intactId="EBI-740781">
        <id>Q9BT92</id>
        <label>TCHP</label>
    </interactant>
    <organismsDiffer>false</organismsDiffer>
    <experiments>8</experiments>
</comment>
<comment type="interaction">
    <interactant intactId="EBI-1181367">
        <id>Q01850</id>
    </interactant>
    <interactant intactId="EBI-747736">
        <id>Q15561</id>
        <label>TEAD4</label>
    </interactant>
    <organismsDiffer>false</organismsDiffer>
    <experiments>3</experiments>
</comment>
<comment type="interaction">
    <interactant intactId="EBI-1181367">
        <id>Q01850</id>
    </interactant>
    <interactant intactId="EBI-751954">
        <id>O15482</id>
        <label>TEX28P2</label>
    </interactant>
    <organismsDiffer>false</organismsDiffer>
    <experiments>3</experiments>
</comment>
<comment type="interaction">
    <interactant intactId="EBI-1181367">
        <id>Q01850</id>
    </interactant>
    <interactant intactId="EBI-740098">
        <id>P36406</id>
        <label>TRIM23</label>
    </interactant>
    <organismsDiffer>false</organismsDiffer>
    <experiments>6</experiments>
</comment>
<comment type="interaction">
    <interactant intactId="EBI-1181367">
        <id>Q01850</id>
    </interactant>
    <interactant intactId="EBI-11059915">
        <id>Q8N7C3</id>
        <label>TRIML2</label>
    </interactant>
    <organismsDiffer>false</organismsDiffer>
    <experiments>3</experiments>
</comment>
<comment type="interaction">
    <interactant intactId="EBI-1181367">
        <id>Q01850</id>
    </interactant>
    <interactant intactId="EBI-10241197">
        <id>Q3SY00</id>
        <label>TSGA10IP</label>
    </interactant>
    <organismsDiffer>false</organismsDiffer>
    <experiments>3</experiments>
</comment>
<comment type="interaction">
    <interactant intactId="EBI-1181367">
        <id>Q01850</id>
    </interactant>
    <interactant intactId="EBI-9090990">
        <id>Q5W5X9-3</id>
        <label>TTC23</label>
    </interactant>
    <organismsDiffer>false</organismsDiffer>
    <experiments>3</experiments>
</comment>
<comment type="interaction">
    <interactant intactId="EBI-1181367">
        <id>Q01850</id>
    </interactant>
    <interactant intactId="EBI-711909">
        <id>P02766</id>
        <label>TTR</label>
    </interactant>
    <organismsDiffer>false</organismsDiffer>
    <experiments>3</experiments>
</comment>
<comment type="interaction">
    <interactant intactId="EBI-1181367">
        <id>Q01850</id>
    </interactant>
    <interactant intactId="EBI-359793">
        <id>P40222</id>
        <label>TXLNA</label>
    </interactant>
    <organismsDiffer>false</organismsDiffer>
    <experiments>7</experiments>
</comment>
<comment type="interaction">
    <interactant intactId="EBI-1181367">
        <id>Q01850</id>
    </interactant>
    <interactant intactId="EBI-6116822">
        <id>Q8N3L3</id>
        <label>TXLNB</label>
    </interactant>
    <organismsDiffer>false</organismsDiffer>
    <experiments>3</experiments>
</comment>
<comment type="interaction">
    <interactant intactId="EBI-1181367">
        <id>Q01850</id>
    </interactant>
    <interactant intactId="EBI-17208936">
        <id>P0CB47</id>
        <label>UBTFL1</label>
    </interactant>
    <organismsDiffer>false</organismsDiffer>
    <experiments>3</experiments>
</comment>
<comment type="interaction">
    <interactant intactId="EBI-1181367">
        <id>Q01850</id>
    </interactant>
    <interactant intactId="EBI-16428984">
        <id>A0A0S2Z6H0</id>
        <label>ZGPAT</label>
    </interactant>
    <organismsDiffer>false</organismsDiffer>
    <experiments>4</experiments>
</comment>
<comment type="interaction">
    <interactant intactId="EBI-1181367">
        <id>Q01850</id>
    </interactant>
    <interactant intactId="EBI-10183064">
        <id>Q8N5A5-2</id>
        <label>ZGPAT</label>
    </interactant>
    <organismsDiffer>false</organismsDiffer>
    <experiments>6</experiments>
</comment>
<comment type="interaction">
    <interactant intactId="EBI-1181367">
        <id>Q01850</id>
    </interactant>
    <interactant intactId="EBI-2682299">
        <id>Q96NC0</id>
        <label>ZMAT2</label>
    </interactant>
    <organismsDiffer>false</organismsDiffer>
    <experiments>3</experiments>
</comment>
<comment type="interaction">
    <interactant intactId="EBI-1181367">
        <id>Q01850</id>
    </interactant>
    <interactant intactId="EBI-10177272">
        <id>P15622-3</id>
        <label>ZNF250</label>
    </interactant>
    <organismsDiffer>false</organismsDiffer>
    <experiments>3</experiments>
</comment>
<comment type="interaction">
    <interactant intactId="EBI-1181367">
        <id>Q01850</id>
    </interactant>
    <interactant intactId="EBI-11041653">
        <id>P13682</id>
        <label>ZNF35</label>
    </interactant>
    <organismsDiffer>false</organismsDiffer>
    <experiments>3</experiments>
</comment>
<comment type="interaction">
    <interactant intactId="EBI-1181367">
        <id>Q01850</id>
    </interactant>
    <interactant intactId="EBI-740727">
        <id>Q8TAU3</id>
        <label>ZNF417</label>
    </interactant>
    <organismsDiffer>false</organismsDiffer>
    <experiments>3</experiments>
</comment>
<comment type="similarity">
    <text evidence="3">Belongs to the CDR2 family.</text>
</comment>
<comment type="sequence caution" evidence="3">
    <conflict type="frameshift">
        <sequence resource="EMBL-CDS" id="AAA51961"/>
    </conflict>
</comment>
<comment type="sequence caution" evidence="3">
    <conflict type="erroneous initiation">
        <sequence resource="EMBL-CDS" id="AAB20813"/>
    </conflict>
</comment>
<comment type="sequence caution" evidence="3">
    <conflict type="erroneous initiation">
        <sequence resource="EMBL-CDS" id="BAA02360"/>
    </conflict>
</comment>
<protein>
    <recommendedName>
        <fullName>Cerebellar degeneration-related protein 2</fullName>
    </recommendedName>
    <alternativeName>
        <fullName>Major Yo paraneoplastic antigen</fullName>
    </alternativeName>
    <alternativeName>
        <fullName>Paraneoplastic cerebellar degeneration-associated antigen</fullName>
    </alternativeName>
</protein>
<sequence length="454" mass="51855">MLAENLVEEFEMKEDEPWYDHQDLQQDLQLAAELGKTLLDRNTELEDSVQQMYTTNQEQLQEIEYLTKQVELLRQMNEQHAKVYEQLDVTARELEETNQKLVADSKASQQKILSLTETIECLQTNIDHLQSQVEELKSSGQGRRSPGKCDQEKPAPSFACLKELYDLRQHFVYDHVFAEKITSLQGQPSPDEEENEHLKKTVTMLQAQLSLERQKRVTMEEEYGLVLKENSELEQQLGATGAYRARALELEAEVAEMRQMLQSEHPFVNGVEKLVPDSLYVPFKEPSQSLLEEMFLTVPESHRKPLKRSSSETILSSLAGSDIVKGHEETCIRRAKAVKQRGISLLHEVDTQYSALKVKYEELLKKCQEEQDSLSHKAVQTSRAAAKDLTGVNAQSEPVASGWELASVNPEPVSSPTTPPEYKALFKEIFSCIKKTKQEIDEQRTKYRSLSSHS</sequence>
<feature type="chain" id="PRO_0000089456" description="Cerebellar degeneration-related protein 2">
    <location>
        <begin position="1"/>
        <end position="454"/>
    </location>
</feature>
<feature type="region of interest" description="Disordered" evidence="2">
    <location>
        <begin position="134"/>
        <end position="153"/>
    </location>
</feature>
<feature type="coiled-coil region" evidence="1">
    <location>
        <begin position="44"/>
        <end position="142"/>
    </location>
</feature>
<feature type="coiled-coil region" evidence="1">
    <location>
        <begin position="192"/>
        <end position="265"/>
    </location>
</feature>
<feature type="coiled-coil region" evidence="1">
    <location>
        <begin position="346"/>
        <end position="380"/>
    </location>
</feature>
<feature type="modified residue" description="Phosphoserine" evidence="4">
    <location>
        <position position="311"/>
    </location>
</feature>
<feature type="sequence conflict" description="In Ref. 5; AAB20813." evidence="3" ref="5">
    <original>L</original>
    <variation>R</variation>
    <location>
        <position position="6"/>
    </location>
</feature>
<feature type="sequence conflict" description="In Ref. 5; AAB20813/BAA02360." evidence="3" ref="5">
    <original>V</original>
    <variation>T</variation>
    <location>
        <position position="7"/>
    </location>
</feature>
<keyword id="KW-0175">Coiled coil</keyword>
<keyword id="KW-0597">Phosphoprotein</keyword>
<keyword id="KW-1267">Proteomics identification</keyword>
<keyword id="KW-1185">Reference proteome</keyword>
<name>CDR2_HUMAN</name>
<reference key="1">
    <citation type="journal article" date="1991" name="Proc. Natl. Acad. Sci. U.S.A.">
        <title>Cloning of a leucine-zipper protein recognized by the sera of patients with antibody-associated paraneoplastic cerebellar degeneration.</title>
        <authorList>
            <person name="Fathallah-Shaykh H."/>
            <person name="Wolf S."/>
            <person name="Wong E."/>
            <person name="Posner J.B."/>
            <person name="Furneaux H.M."/>
        </authorList>
    </citation>
    <scope>NUCLEOTIDE SEQUENCE [MRNA]</scope>
</reference>
<reference key="2">
    <citation type="journal article" date="2004" name="Nat. Genet.">
        <title>Complete sequencing and characterization of 21,243 full-length human cDNAs.</title>
        <authorList>
            <person name="Ota T."/>
            <person name="Suzuki Y."/>
            <person name="Nishikawa T."/>
            <person name="Otsuki T."/>
            <person name="Sugiyama T."/>
            <person name="Irie R."/>
            <person name="Wakamatsu A."/>
            <person name="Hayashi K."/>
            <person name="Sato H."/>
            <person name="Nagai K."/>
            <person name="Kimura K."/>
            <person name="Makita H."/>
            <person name="Sekine M."/>
            <person name="Obayashi M."/>
            <person name="Nishi T."/>
            <person name="Shibahara T."/>
            <person name="Tanaka T."/>
            <person name="Ishii S."/>
            <person name="Yamamoto J."/>
            <person name="Saito K."/>
            <person name="Kawai Y."/>
            <person name="Isono Y."/>
            <person name="Nakamura Y."/>
            <person name="Nagahari K."/>
            <person name="Murakami K."/>
            <person name="Yasuda T."/>
            <person name="Iwayanagi T."/>
            <person name="Wagatsuma M."/>
            <person name="Shiratori A."/>
            <person name="Sudo H."/>
            <person name="Hosoiri T."/>
            <person name="Kaku Y."/>
            <person name="Kodaira H."/>
            <person name="Kondo H."/>
            <person name="Sugawara M."/>
            <person name="Takahashi M."/>
            <person name="Kanda K."/>
            <person name="Yokoi T."/>
            <person name="Furuya T."/>
            <person name="Kikkawa E."/>
            <person name="Omura Y."/>
            <person name="Abe K."/>
            <person name="Kamihara K."/>
            <person name="Katsuta N."/>
            <person name="Sato K."/>
            <person name="Tanikawa M."/>
            <person name="Yamazaki M."/>
            <person name="Ninomiya K."/>
            <person name="Ishibashi T."/>
            <person name="Yamashita H."/>
            <person name="Murakawa K."/>
            <person name="Fujimori K."/>
            <person name="Tanai H."/>
            <person name="Kimata M."/>
            <person name="Watanabe M."/>
            <person name="Hiraoka S."/>
            <person name="Chiba Y."/>
            <person name="Ishida S."/>
            <person name="Ono Y."/>
            <person name="Takiguchi S."/>
            <person name="Watanabe S."/>
            <person name="Yosida M."/>
            <person name="Hotuta T."/>
            <person name="Kusano J."/>
            <person name="Kanehori K."/>
            <person name="Takahashi-Fujii A."/>
            <person name="Hara H."/>
            <person name="Tanase T.-O."/>
            <person name="Nomura Y."/>
            <person name="Togiya S."/>
            <person name="Komai F."/>
            <person name="Hara R."/>
            <person name="Takeuchi K."/>
            <person name="Arita M."/>
            <person name="Imose N."/>
            <person name="Musashino K."/>
            <person name="Yuuki H."/>
            <person name="Oshima A."/>
            <person name="Sasaki N."/>
            <person name="Aotsuka S."/>
            <person name="Yoshikawa Y."/>
            <person name="Matsunawa H."/>
            <person name="Ichihara T."/>
            <person name="Shiohata N."/>
            <person name="Sano S."/>
            <person name="Moriya S."/>
            <person name="Momiyama H."/>
            <person name="Satoh N."/>
            <person name="Takami S."/>
            <person name="Terashima Y."/>
            <person name="Suzuki O."/>
            <person name="Nakagawa S."/>
            <person name="Senoh A."/>
            <person name="Mizoguchi H."/>
            <person name="Goto Y."/>
            <person name="Shimizu F."/>
            <person name="Wakebe H."/>
            <person name="Hishigaki H."/>
            <person name="Watanabe T."/>
            <person name="Sugiyama A."/>
            <person name="Takemoto M."/>
            <person name="Kawakami B."/>
            <person name="Yamazaki M."/>
            <person name="Watanabe K."/>
            <person name="Kumagai A."/>
            <person name="Itakura S."/>
            <person name="Fukuzumi Y."/>
            <person name="Fujimori Y."/>
            <person name="Komiyama M."/>
            <person name="Tashiro H."/>
            <person name="Tanigami A."/>
            <person name="Fujiwara T."/>
            <person name="Ono T."/>
            <person name="Yamada K."/>
            <person name="Fujii Y."/>
            <person name="Ozaki K."/>
            <person name="Hirao M."/>
            <person name="Ohmori Y."/>
            <person name="Kawabata A."/>
            <person name="Hikiji T."/>
            <person name="Kobatake N."/>
            <person name="Inagaki H."/>
            <person name="Ikema Y."/>
            <person name="Okamoto S."/>
            <person name="Okitani R."/>
            <person name="Kawakami T."/>
            <person name="Noguchi S."/>
            <person name="Itoh T."/>
            <person name="Shigeta K."/>
            <person name="Senba T."/>
            <person name="Matsumura K."/>
            <person name="Nakajima Y."/>
            <person name="Mizuno T."/>
            <person name="Morinaga M."/>
            <person name="Sasaki M."/>
            <person name="Togashi T."/>
            <person name="Oyama M."/>
            <person name="Hata H."/>
            <person name="Watanabe M."/>
            <person name="Komatsu T."/>
            <person name="Mizushima-Sugano J."/>
            <person name="Satoh T."/>
            <person name="Shirai Y."/>
            <person name="Takahashi Y."/>
            <person name="Nakagawa K."/>
            <person name="Okumura K."/>
            <person name="Nagase T."/>
            <person name="Nomura N."/>
            <person name="Kikuchi H."/>
            <person name="Masuho Y."/>
            <person name="Yamashita R."/>
            <person name="Nakai K."/>
            <person name="Yada T."/>
            <person name="Nakamura Y."/>
            <person name="Ohara O."/>
            <person name="Isogai T."/>
            <person name="Sugano S."/>
        </authorList>
    </citation>
    <scope>NUCLEOTIDE SEQUENCE [LARGE SCALE MRNA]</scope>
    <source>
        <tissue>Testis</tissue>
    </source>
</reference>
<reference key="3">
    <citation type="submission" date="2005-07" db="EMBL/GenBank/DDBJ databases">
        <authorList>
            <person name="Mural R.J."/>
            <person name="Istrail S."/>
            <person name="Sutton G.G."/>
            <person name="Florea L."/>
            <person name="Halpern A.L."/>
            <person name="Mobarry C.M."/>
            <person name="Lippert R."/>
            <person name="Walenz B."/>
            <person name="Shatkay H."/>
            <person name="Dew I."/>
            <person name="Miller J.R."/>
            <person name="Flanigan M.J."/>
            <person name="Edwards N.J."/>
            <person name="Bolanos R."/>
            <person name="Fasulo D."/>
            <person name="Halldorsson B.V."/>
            <person name="Hannenhalli S."/>
            <person name="Turner R."/>
            <person name="Yooseph S."/>
            <person name="Lu F."/>
            <person name="Nusskern D.R."/>
            <person name="Shue B.C."/>
            <person name="Zheng X.H."/>
            <person name="Zhong F."/>
            <person name="Delcher A.L."/>
            <person name="Huson D.H."/>
            <person name="Kravitz S.A."/>
            <person name="Mouchard L."/>
            <person name="Reinert K."/>
            <person name="Remington K.A."/>
            <person name="Clark A.G."/>
            <person name="Waterman M.S."/>
            <person name="Eichler E.E."/>
            <person name="Adams M.D."/>
            <person name="Hunkapiller M.W."/>
            <person name="Myers E.W."/>
            <person name="Venter J.C."/>
        </authorList>
    </citation>
    <scope>NUCLEOTIDE SEQUENCE [LARGE SCALE GENOMIC DNA]</scope>
</reference>
<reference key="4">
    <citation type="journal article" date="2004" name="Genome Res.">
        <title>The status, quality, and expansion of the NIH full-length cDNA project: the Mammalian Gene Collection (MGC).</title>
        <authorList>
            <consortium name="The MGC Project Team"/>
        </authorList>
    </citation>
    <scope>NUCLEOTIDE SEQUENCE [LARGE SCALE MRNA]</scope>
    <source>
        <tissue>Eye</tissue>
    </source>
</reference>
<reference key="5">
    <citation type="journal article" date="1990" name="Ann. Neurol.">
        <title>Isolation of a complementary DNA clone encoding an autoantigen recognized by an anti-neuronal cell antibody from a patient with paraneoplastic cerebellar degeneration.</title>
        <authorList>
            <person name="Sakai K."/>
            <person name="Mitchell D.J."/>
            <person name="Tsukamoto T."/>
            <person name="Steinman L."/>
        </authorList>
    </citation>
    <scope>NUCLEOTIDE SEQUENCE [MRNA] OF 6-454</scope>
    <source>
        <tissue>Cerebellum</tissue>
    </source>
</reference>
<reference key="6">
    <citation type="journal article" date="1991" name="Ann. Neurol.">
        <authorList>
            <person name="Sakai K."/>
            <person name="Mitchell D.J."/>
            <person name="Tsukamoto T."/>
            <person name="Steinman L."/>
        </authorList>
    </citation>
    <scope>ERRATUM OF PUBMED:2260856</scope>
</reference>
<reference key="7">
    <citation type="journal article" date="2008" name="Proc. Natl. Acad. Sci. U.S.A.">
        <title>A quantitative atlas of mitotic phosphorylation.</title>
        <authorList>
            <person name="Dephoure N."/>
            <person name="Zhou C."/>
            <person name="Villen J."/>
            <person name="Beausoleil S.A."/>
            <person name="Bakalarski C.E."/>
            <person name="Elledge S.J."/>
            <person name="Gygi S.P."/>
        </authorList>
    </citation>
    <scope>IDENTIFICATION BY MASS SPECTROMETRY [LARGE SCALE ANALYSIS]</scope>
    <source>
        <tissue>Cervix carcinoma</tissue>
    </source>
</reference>
<reference key="8">
    <citation type="journal article" date="2009" name="Sci. Signal.">
        <title>Quantitative phosphoproteomic analysis of T cell receptor signaling reveals system-wide modulation of protein-protein interactions.</title>
        <authorList>
            <person name="Mayya V."/>
            <person name="Lundgren D.H."/>
            <person name="Hwang S.-I."/>
            <person name="Rezaul K."/>
            <person name="Wu L."/>
            <person name="Eng J.K."/>
            <person name="Rodionov V."/>
            <person name="Han D.K."/>
        </authorList>
    </citation>
    <scope>IDENTIFICATION BY MASS SPECTROMETRY [LARGE SCALE ANALYSIS]</scope>
    <source>
        <tissue>Leukemic T-cell</tissue>
    </source>
</reference>
<reference key="9">
    <citation type="journal article" date="2011" name="Sci. Signal.">
        <title>System-wide temporal characterization of the proteome and phosphoproteome of human embryonic stem cell differentiation.</title>
        <authorList>
            <person name="Rigbolt K.T."/>
            <person name="Prokhorova T.A."/>
            <person name="Akimov V."/>
            <person name="Henningsen J."/>
            <person name="Johansen P.T."/>
            <person name="Kratchmarova I."/>
            <person name="Kassem M."/>
            <person name="Mann M."/>
            <person name="Olsen J.V."/>
            <person name="Blagoev B."/>
        </authorList>
    </citation>
    <scope>IDENTIFICATION BY MASS SPECTROMETRY [LARGE SCALE ANALYSIS]</scope>
</reference>
<reference key="10">
    <citation type="journal article" date="2013" name="J. Proteome Res.">
        <title>Toward a comprehensive characterization of a human cancer cell phosphoproteome.</title>
        <authorList>
            <person name="Zhou H."/>
            <person name="Di Palma S."/>
            <person name="Preisinger C."/>
            <person name="Peng M."/>
            <person name="Polat A.N."/>
            <person name="Heck A.J."/>
            <person name="Mohammed S."/>
        </authorList>
    </citation>
    <scope>PHOSPHORYLATION [LARGE SCALE ANALYSIS] AT SER-311</scope>
    <scope>IDENTIFICATION BY MASS SPECTROMETRY [LARGE SCALE ANALYSIS]</scope>
    <source>
        <tissue>Cervix carcinoma</tissue>
        <tissue>Erythroleukemia</tissue>
    </source>
</reference>
<reference key="11">
    <citation type="journal article" date="2014" name="J. Proteomics">
        <title>An enzyme assisted RP-RPLC approach for in-depth analysis of human liver phosphoproteome.</title>
        <authorList>
            <person name="Bian Y."/>
            <person name="Song C."/>
            <person name="Cheng K."/>
            <person name="Dong M."/>
            <person name="Wang F."/>
            <person name="Huang J."/>
            <person name="Sun D."/>
            <person name="Wang L."/>
            <person name="Ye M."/>
            <person name="Zou H."/>
        </authorList>
    </citation>
    <scope>IDENTIFICATION BY MASS SPECTROMETRY [LARGE SCALE ANALYSIS]</scope>
    <source>
        <tissue>Liver</tissue>
    </source>
</reference>
<organism>
    <name type="scientific">Homo sapiens</name>
    <name type="common">Human</name>
    <dbReference type="NCBI Taxonomy" id="9606"/>
    <lineage>
        <taxon>Eukaryota</taxon>
        <taxon>Metazoa</taxon>
        <taxon>Chordata</taxon>
        <taxon>Craniata</taxon>
        <taxon>Vertebrata</taxon>
        <taxon>Euteleostomi</taxon>
        <taxon>Mammalia</taxon>
        <taxon>Eutheria</taxon>
        <taxon>Euarchontoglires</taxon>
        <taxon>Primates</taxon>
        <taxon>Haplorrhini</taxon>
        <taxon>Catarrhini</taxon>
        <taxon>Hominidae</taxon>
        <taxon>Homo</taxon>
    </lineage>
</organism>
<accession>Q01850</accession>
<accession>A8K8A8</accession>
<accession>Q13977</accession>
<proteinExistence type="evidence at protein level"/>
<evidence type="ECO:0000255" key="1"/>
<evidence type="ECO:0000256" key="2">
    <source>
        <dbReference type="SAM" id="MobiDB-lite"/>
    </source>
</evidence>
<evidence type="ECO:0000305" key="3"/>
<evidence type="ECO:0007744" key="4">
    <source>
    </source>
</evidence>